<evidence type="ECO:0000250" key="1"/>
<evidence type="ECO:0000250" key="2">
    <source>
        <dbReference type="UniProtKB" id="P14618"/>
    </source>
</evidence>
<evidence type="ECO:0000255" key="3"/>
<evidence type="ECO:0000305" key="4"/>
<reference key="1">
    <citation type="journal article" date="1990" name="Plant Mol. Biol.">
        <title>Cloning and characterization of a cDNA for the cytosolic isozyme of plant pyruvate kinase: the relationship between the plant and non-plant enzyme.</title>
        <authorList>
            <person name="Blakeley S.D."/>
            <person name="Plaxton W.C."/>
            <person name="Dennis D.T."/>
        </authorList>
    </citation>
    <scope>NUCLEOTIDE SEQUENCE [MRNA]</scope>
    <source>
        <strain>cv. Kennebec</strain>
        <tissue>Tuber</tissue>
    </source>
</reference>
<reference key="2">
    <citation type="journal article" date="1992" name="Gene">
        <title>Structure of the gene encoding potato cytosolic pyruvate kinase.</title>
        <authorList>
            <person name="Cole K.P."/>
            <person name="Blakeley S.D."/>
            <person name="Dennis D.T."/>
        </authorList>
    </citation>
    <scope>NUCLEOTIDE SEQUENCE [MRNA]</scope>
</reference>
<dbReference type="EC" id="2.7.1.40"/>
<dbReference type="EMBL" id="X53688">
    <property type="protein sequence ID" value="CAA37727.1"/>
    <property type="molecule type" value="mRNA"/>
</dbReference>
<dbReference type="PIR" id="JC1481">
    <property type="entry name" value="JC1481"/>
</dbReference>
<dbReference type="RefSeq" id="NP_001275085.1">
    <property type="nucleotide sequence ID" value="NM_001288156.1"/>
</dbReference>
<dbReference type="SMR" id="P22200"/>
<dbReference type="FunCoup" id="P22200">
    <property type="interactions" value="1973"/>
</dbReference>
<dbReference type="STRING" id="4113.P22200"/>
<dbReference type="PaxDb" id="4113-PGSC0003DMT400065094"/>
<dbReference type="GeneID" id="102601328"/>
<dbReference type="KEGG" id="sot:102601328"/>
<dbReference type="eggNOG" id="KOG2323">
    <property type="taxonomic scope" value="Eukaryota"/>
</dbReference>
<dbReference type="InParanoid" id="P22200"/>
<dbReference type="OrthoDB" id="108365at2759"/>
<dbReference type="UniPathway" id="UPA00109">
    <property type="reaction ID" value="UER00188"/>
</dbReference>
<dbReference type="Proteomes" id="UP000011115">
    <property type="component" value="Unassembled WGS sequence"/>
</dbReference>
<dbReference type="ExpressionAtlas" id="P22200">
    <property type="expression patterns" value="baseline"/>
</dbReference>
<dbReference type="GO" id="GO:0005737">
    <property type="term" value="C:cytoplasm"/>
    <property type="evidence" value="ECO:0000318"/>
    <property type="project" value="GO_Central"/>
</dbReference>
<dbReference type="GO" id="GO:0005524">
    <property type="term" value="F:ATP binding"/>
    <property type="evidence" value="ECO:0007669"/>
    <property type="project" value="UniProtKB-KW"/>
</dbReference>
<dbReference type="GO" id="GO:0016301">
    <property type="term" value="F:kinase activity"/>
    <property type="evidence" value="ECO:0007669"/>
    <property type="project" value="UniProtKB-KW"/>
</dbReference>
<dbReference type="GO" id="GO:0000287">
    <property type="term" value="F:magnesium ion binding"/>
    <property type="evidence" value="ECO:0007669"/>
    <property type="project" value="InterPro"/>
</dbReference>
<dbReference type="GO" id="GO:0030955">
    <property type="term" value="F:potassium ion binding"/>
    <property type="evidence" value="ECO:0007669"/>
    <property type="project" value="InterPro"/>
</dbReference>
<dbReference type="GO" id="GO:0004743">
    <property type="term" value="F:pyruvate kinase activity"/>
    <property type="evidence" value="ECO:0000318"/>
    <property type="project" value="GO_Central"/>
</dbReference>
<dbReference type="GO" id="GO:0006096">
    <property type="term" value="P:glycolytic process"/>
    <property type="evidence" value="ECO:0000318"/>
    <property type="project" value="GO_Central"/>
</dbReference>
<dbReference type="CDD" id="cd00288">
    <property type="entry name" value="Pyruvate_Kinase"/>
    <property type="match status" value="1"/>
</dbReference>
<dbReference type="FunFam" id="2.40.33.10:FF:000001">
    <property type="entry name" value="Pyruvate kinase"/>
    <property type="match status" value="1"/>
</dbReference>
<dbReference type="FunFam" id="3.20.20.60:FF:000001">
    <property type="entry name" value="Pyruvate kinase"/>
    <property type="match status" value="1"/>
</dbReference>
<dbReference type="FunFam" id="3.40.1380.20:FF:000005">
    <property type="entry name" value="Pyruvate kinase"/>
    <property type="match status" value="1"/>
</dbReference>
<dbReference type="Gene3D" id="3.20.20.60">
    <property type="entry name" value="Phosphoenolpyruvate-binding domains"/>
    <property type="match status" value="1"/>
</dbReference>
<dbReference type="Gene3D" id="2.40.33.10">
    <property type="entry name" value="PK beta-barrel domain-like"/>
    <property type="match status" value="1"/>
</dbReference>
<dbReference type="Gene3D" id="3.40.1380.20">
    <property type="entry name" value="Pyruvate kinase, C-terminal domain"/>
    <property type="match status" value="1"/>
</dbReference>
<dbReference type="InterPro" id="IPR001697">
    <property type="entry name" value="Pyr_Knase"/>
</dbReference>
<dbReference type="InterPro" id="IPR015813">
    <property type="entry name" value="Pyrv/PenolPyrv_kinase-like_dom"/>
</dbReference>
<dbReference type="InterPro" id="IPR040442">
    <property type="entry name" value="Pyrv_kinase-like_dom_sf"/>
</dbReference>
<dbReference type="InterPro" id="IPR011037">
    <property type="entry name" value="Pyrv_Knase-like_insert_dom_sf"/>
</dbReference>
<dbReference type="InterPro" id="IPR018209">
    <property type="entry name" value="Pyrv_Knase_AS"/>
</dbReference>
<dbReference type="InterPro" id="IPR015793">
    <property type="entry name" value="Pyrv_Knase_brl"/>
</dbReference>
<dbReference type="InterPro" id="IPR015795">
    <property type="entry name" value="Pyrv_Knase_C"/>
</dbReference>
<dbReference type="InterPro" id="IPR036918">
    <property type="entry name" value="Pyrv_Knase_C_sf"/>
</dbReference>
<dbReference type="InterPro" id="IPR015806">
    <property type="entry name" value="Pyrv_Knase_insert_dom_sf"/>
</dbReference>
<dbReference type="NCBIfam" id="NF004491">
    <property type="entry name" value="PRK05826.1"/>
    <property type="match status" value="1"/>
</dbReference>
<dbReference type="NCBIfam" id="NF004978">
    <property type="entry name" value="PRK06354.1"/>
    <property type="match status" value="1"/>
</dbReference>
<dbReference type="NCBIfam" id="TIGR01064">
    <property type="entry name" value="pyruv_kin"/>
    <property type="match status" value="1"/>
</dbReference>
<dbReference type="PANTHER" id="PTHR11817">
    <property type="entry name" value="PYRUVATE KINASE"/>
    <property type="match status" value="1"/>
</dbReference>
<dbReference type="Pfam" id="PF00224">
    <property type="entry name" value="PK"/>
    <property type="match status" value="1"/>
</dbReference>
<dbReference type="Pfam" id="PF02887">
    <property type="entry name" value="PK_C"/>
    <property type="match status" value="1"/>
</dbReference>
<dbReference type="PRINTS" id="PR01050">
    <property type="entry name" value="PYRUVTKNASE"/>
</dbReference>
<dbReference type="SUPFAM" id="SSF51621">
    <property type="entry name" value="Phosphoenolpyruvate/pyruvate domain"/>
    <property type="match status" value="1"/>
</dbReference>
<dbReference type="SUPFAM" id="SSF50800">
    <property type="entry name" value="PK beta-barrel domain-like"/>
    <property type="match status" value="1"/>
</dbReference>
<dbReference type="SUPFAM" id="SSF52935">
    <property type="entry name" value="PK C-terminal domain-like"/>
    <property type="match status" value="1"/>
</dbReference>
<dbReference type="PROSITE" id="PS00110">
    <property type="entry name" value="PYRUVATE_KINASE"/>
    <property type="match status" value="1"/>
</dbReference>
<comment type="catalytic activity">
    <reaction>
        <text>pyruvate + ATP = phosphoenolpyruvate + ADP + H(+)</text>
        <dbReference type="Rhea" id="RHEA:18157"/>
        <dbReference type="ChEBI" id="CHEBI:15361"/>
        <dbReference type="ChEBI" id="CHEBI:15378"/>
        <dbReference type="ChEBI" id="CHEBI:30616"/>
        <dbReference type="ChEBI" id="CHEBI:58702"/>
        <dbReference type="ChEBI" id="CHEBI:456216"/>
        <dbReference type="EC" id="2.7.1.40"/>
    </reaction>
</comment>
<comment type="cofactor">
    <cofactor>
        <name>Mg(2+)</name>
        <dbReference type="ChEBI" id="CHEBI:18420"/>
    </cofactor>
</comment>
<comment type="cofactor">
    <cofactor>
        <name>K(+)</name>
        <dbReference type="ChEBI" id="CHEBI:29103"/>
    </cofactor>
</comment>
<comment type="pathway">
    <text>Carbohydrate degradation; glycolysis; pyruvate from D-glyceraldehyde 3-phosphate: step 5/5.</text>
</comment>
<comment type="subunit">
    <text>Homotetramer.</text>
</comment>
<comment type="subcellular location">
    <subcellularLocation>
        <location>Cytoplasm</location>
    </subcellularLocation>
</comment>
<comment type="similarity">
    <text evidence="4">Belongs to the pyruvate kinase family.</text>
</comment>
<accession>P22200</accession>
<keyword id="KW-0067">ATP-binding</keyword>
<keyword id="KW-0963">Cytoplasm</keyword>
<keyword id="KW-0324">Glycolysis</keyword>
<keyword id="KW-0418">Kinase</keyword>
<keyword id="KW-0460">Magnesium</keyword>
<keyword id="KW-0479">Metal-binding</keyword>
<keyword id="KW-0547">Nucleotide-binding</keyword>
<keyword id="KW-0630">Potassium</keyword>
<keyword id="KW-0670">Pyruvate</keyword>
<keyword id="KW-1185">Reference proteome</keyword>
<keyword id="KW-0808">Transferase</keyword>
<feature type="chain" id="PRO_0000112124" description="Pyruvate kinase, cytosolic isozyme">
    <location>
        <begin position="1"/>
        <end position="510"/>
    </location>
</feature>
<feature type="binding site" evidence="1">
    <location>
        <position position="50"/>
    </location>
    <ligand>
        <name>substrate</name>
    </ligand>
</feature>
<feature type="binding site" evidence="2">
    <location>
        <begin position="52"/>
        <end position="55"/>
    </location>
    <ligand>
        <name>ATP</name>
        <dbReference type="ChEBI" id="CHEBI:30616"/>
    </ligand>
</feature>
<feature type="binding site" evidence="1">
    <location>
        <position position="52"/>
    </location>
    <ligand>
        <name>K(+)</name>
        <dbReference type="ChEBI" id="CHEBI:29103"/>
    </ligand>
</feature>
<feature type="binding site" evidence="1">
    <location>
        <position position="54"/>
    </location>
    <ligand>
        <name>K(+)</name>
        <dbReference type="ChEBI" id="CHEBI:29103"/>
    </ligand>
</feature>
<feature type="binding site" evidence="1">
    <location>
        <position position="84"/>
    </location>
    <ligand>
        <name>K(+)</name>
        <dbReference type="ChEBI" id="CHEBI:29103"/>
    </ligand>
</feature>
<feature type="binding site" evidence="1">
    <location>
        <position position="85"/>
    </location>
    <ligand>
        <name>K(+)</name>
        <dbReference type="ChEBI" id="CHEBI:29103"/>
    </ligand>
</feature>
<feature type="binding site" evidence="2">
    <location>
        <position position="91"/>
    </location>
    <ligand>
        <name>ATP</name>
        <dbReference type="ChEBI" id="CHEBI:30616"/>
    </ligand>
</feature>
<feature type="binding site" evidence="2">
    <location>
        <position position="176"/>
    </location>
    <ligand>
        <name>ATP</name>
        <dbReference type="ChEBI" id="CHEBI:30616"/>
    </ligand>
</feature>
<feature type="binding site" evidence="3">
    <location>
        <position position="242"/>
    </location>
    <ligand>
        <name>Mg(2+)</name>
        <dbReference type="ChEBI" id="CHEBI:18420"/>
    </ligand>
</feature>
<feature type="binding site" evidence="1">
    <location>
        <position position="265"/>
    </location>
    <ligand>
        <name>substrate</name>
    </ligand>
</feature>
<feature type="binding site" evidence="1">
    <location>
        <position position="266"/>
    </location>
    <ligand>
        <name>Mg(2+)</name>
        <dbReference type="ChEBI" id="CHEBI:18420"/>
    </ligand>
</feature>
<feature type="binding site" evidence="1">
    <location>
        <position position="266"/>
    </location>
    <ligand>
        <name>substrate</name>
    </ligand>
</feature>
<feature type="binding site" evidence="1">
    <location>
        <position position="298"/>
    </location>
    <ligand>
        <name>substrate</name>
    </ligand>
</feature>
<feature type="site" description="Transition state stabilizer" evidence="1">
    <location>
        <position position="240"/>
    </location>
</feature>
<feature type="sequence variant">
    <original>M</original>
    <variation>V</variation>
    <location>
        <position position="133"/>
    </location>
</feature>
<feature type="sequence variant">
    <original>T</original>
    <variation>S</variation>
    <location>
        <position position="169"/>
    </location>
</feature>
<feature type="sequence variant">
    <original>V</original>
    <variation>A</variation>
    <location>
        <position position="227"/>
    </location>
</feature>
<feature type="sequence variant">
    <original>A</original>
    <variation>R</variation>
    <location>
        <position position="309"/>
    </location>
</feature>
<sequence length="510" mass="55170">MANIDIAGIMKDLPNDGRIPKTKIVCTLGPSSRTVPMLEKLLRAGMNVARFNFSHGTHEYHQETLDNLKIAMQNTQILCAVMLDTKGPEIRTGFLTDGKPIQLKEGQEITVSTDYTIKGNEEMISMSYKKLVMDLKPGNTILCADGTITLTVLSCDPPSGTVRCRCENTATLGERKNVNLPGVVVDLPTLTEKDKEDILEWGVPNNIDMIALSFVRKGSDLVNVRKVLGPHAKRIQLMSKVENQEGVINFDEILRETDSFMVARGDLGMEIPVEKIFLAQKMMIYKCNLAGKAVVTATQMLESMIKSPAPTRAEATDVANAVLDGTDCVMLSGESAAGAYPELAVKIMSRICIEAESSLDNEAIFKEMIRCTPLPMSPLESLASSAVRTANKARAKLIVVLTRGGSTAKLVAKYRPAVPILSVVVPVLTTDSFDWSISDETPARHSLVYRGLIPLLGEGSAKATDSESTEVILEAALKSAVTRGLCKPGDAVVALHRIGSASVIKICVVK</sequence>
<protein>
    <recommendedName>
        <fullName>Pyruvate kinase, cytosolic isozyme</fullName>
        <shortName>PK</shortName>
        <ecNumber>2.7.1.40</ecNumber>
    </recommendedName>
</protein>
<proteinExistence type="evidence at transcript level"/>
<name>KPYC_SOLTU</name>
<organism>
    <name type="scientific">Solanum tuberosum</name>
    <name type="common">Potato</name>
    <dbReference type="NCBI Taxonomy" id="4113"/>
    <lineage>
        <taxon>Eukaryota</taxon>
        <taxon>Viridiplantae</taxon>
        <taxon>Streptophyta</taxon>
        <taxon>Embryophyta</taxon>
        <taxon>Tracheophyta</taxon>
        <taxon>Spermatophyta</taxon>
        <taxon>Magnoliopsida</taxon>
        <taxon>eudicotyledons</taxon>
        <taxon>Gunneridae</taxon>
        <taxon>Pentapetalae</taxon>
        <taxon>asterids</taxon>
        <taxon>lamiids</taxon>
        <taxon>Solanales</taxon>
        <taxon>Solanaceae</taxon>
        <taxon>Solanoideae</taxon>
        <taxon>Solaneae</taxon>
        <taxon>Solanum</taxon>
    </lineage>
</organism>